<sequence>MSKLTKKQKKIAEVIKPNQLYTVADAVAILKQFASKKFRESLDISINLGVDPRKSDQVVRSSTNLPKGTGKTVRVAVFAQGDNAAKATAAGADIVGFEDLADKIKAGEMNFDVVIATPDAMRIVGQLGQILGPRGLMPNPKVGTVTTNVEAAVNDAKSGQVRYRTDKNGIIHCTVGKADFAPEDVLENVVALINDLKKAKPASSKGQYLKKISLSTTMGPGLPIDISSIPV</sequence>
<keyword id="KW-1185">Reference proteome</keyword>
<keyword id="KW-0678">Repressor</keyword>
<keyword id="KW-0687">Ribonucleoprotein</keyword>
<keyword id="KW-0689">Ribosomal protein</keyword>
<keyword id="KW-0694">RNA-binding</keyword>
<keyword id="KW-0699">rRNA-binding</keyword>
<keyword id="KW-0810">Translation regulation</keyword>
<keyword id="KW-0820">tRNA-binding</keyword>
<accession>Q5ZYQ3</accession>
<reference key="1">
    <citation type="journal article" date="2004" name="Science">
        <title>The genomic sequence of the accidental pathogen Legionella pneumophila.</title>
        <authorList>
            <person name="Chien M."/>
            <person name="Morozova I."/>
            <person name="Shi S."/>
            <person name="Sheng H."/>
            <person name="Chen J."/>
            <person name="Gomez S.M."/>
            <person name="Asamani G."/>
            <person name="Hill K."/>
            <person name="Nuara J."/>
            <person name="Feder M."/>
            <person name="Rineer J."/>
            <person name="Greenberg J.J."/>
            <person name="Steshenko V."/>
            <person name="Park S.H."/>
            <person name="Zhao B."/>
            <person name="Teplitskaya E."/>
            <person name="Edwards J.R."/>
            <person name="Pampou S."/>
            <person name="Georghiou A."/>
            <person name="Chou I.-C."/>
            <person name="Iannuccilli W."/>
            <person name="Ulz M.E."/>
            <person name="Kim D.H."/>
            <person name="Geringer-Sameth A."/>
            <person name="Goldsberry C."/>
            <person name="Morozov P."/>
            <person name="Fischer S.G."/>
            <person name="Segal G."/>
            <person name="Qu X."/>
            <person name="Rzhetsky A."/>
            <person name="Zhang P."/>
            <person name="Cayanis E."/>
            <person name="De Jong P.J."/>
            <person name="Ju J."/>
            <person name="Kalachikov S."/>
            <person name="Shuman H.A."/>
            <person name="Russo J.J."/>
        </authorList>
    </citation>
    <scope>NUCLEOTIDE SEQUENCE [LARGE SCALE GENOMIC DNA]</scope>
    <source>
        <strain>Philadelphia 1 / ATCC 33152 / DSM 7513</strain>
    </source>
</reference>
<organism>
    <name type="scientific">Legionella pneumophila subsp. pneumophila (strain Philadelphia 1 / ATCC 33152 / DSM 7513)</name>
    <dbReference type="NCBI Taxonomy" id="272624"/>
    <lineage>
        <taxon>Bacteria</taxon>
        <taxon>Pseudomonadati</taxon>
        <taxon>Pseudomonadota</taxon>
        <taxon>Gammaproteobacteria</taxon>
        <taxon>Legionellales</taxon>
        <taxon>Legionellaceae</taxon>
        <taxon>Legionella</taxon>
    </lineage>
</organism>
<evidence type="ECO:0000255" key="1">
    <source>
        <dbReference type="HAMAP-Rule" id="MF_01318"/>
    </source>
</evidence>
<evidence type="ECO:0000305" key="2"/>
<dbReference type="EMBL" id="AE017354">
    <property type="protein sequence ID" value="AAU26416.1"/>
    <property type="molecule type" value="Genomic_DNA"/>
</dbReference>
<dbReference type="RefSeq" id="WP_010946070.1">
    <property type="nucleotide sequence ID" value="NC_002942.5"/>
</dbReference>
<dbReference type="RefSeq" id="YP_094363.1">
    <property type="nucleotide sequence ID" value="NC_002942.5"/>
</dbReference>
<dbReference type="SMR" id="Q5ZYQ3"/>
<dbReference type="STRING" id="272624.lpg0319"/>
<dbReference type="PaxDb" id="272624-lpg0319"/>
<dbReference type="GeneID" id="57034322"/>
<dbReference type="KEGG" id="lpn:lpg0319"/>
<dbReference type="PATRIC" id="fig|272624.6.peg.326"/>
<dbReference type="eggNOG" id="COG0081">
    <property type="taxonomic scope" value="Bacteria"/>
</dbReference>
<dbReference type="HOGENOM" id="CLU_062853_0_0_6"/>
<dbReference type="OrthoDB" id="9803740at2"/>
<dbReference type="Proteomes" id="UP000000609">
    <property type="component" value="Chromosome"/>
</dbReference>
<dbReference type="GO" id="GO:0022625">
    <property type="term" value="C:cytosolic large ribosomal subunit"/>
    <property type="evidence" value="ECO:0007669"/>
    <property type="project" value="TreeGrafter"/>
</dbReference>
<dbReference type="GO" id="GO:0019843">
    <property type="term" value="F:rRNA binding"/>
    <property type="evidence" value="ECO:0007669"/>
    <property type="project" value="UniProtKB-UniRule"/>
</dbReference>
<dbReference type="GO" id="GO:0003735">
    <property type="term" value="F:structural constituent of ribosome"/>
    <property type="evidence" value="ECO:0007669"/>
    <property type="project" value="InterPro"/>
</dbReference>
<dbReference type="GO" id="GO:0000049">
    <property type="term" value="F:tRNA binding"/>
    <property type="evidence" value="ECO:0007669"/>
    <property type="project" value="UniProtKB-KW"/>
</dbReference>
<dbReference type="GO" id="GO:0006417">
    <property type="term" value="P:regulation of translation"/>
    <property type="evidence" value="ECO:0007669"/>
    <property type="project" value="UniProtKB-KW"/>
</dbReference>
<dbReference type="GO" id="GO:0006412">
    <property type="term" value="P:translation"/>
    <property type="evidence" value="ECO:0007669"/>
    <property type="project" value="UniProtKB-UniRule"/>
</dbReference>
<dbReference type="CDD" id="cd00403">
    <property type="entry name" value="Ribosomal_L1"/>
    <property type="match status" value="1"/>
</dbReference>
<dbReference type="FunFam" id="3.40.50.790:FF:000001">
    <property type="entry name" value="50S ribosomal protein L1"/>
    <property type="match status" value="1"/>
</dbReference>
<dbReference type="Gene3D" id="3.30.190.20">
    <property type="match status" value="1"/>
</dbReference>
<dbReference type="Gene3D" id="3.40.50.790">
    <property type="match status" value="1"/>
</dbReference>
<dbReference type="HAMAP" id="MF_01318_B">
    <property type="entry name" value="Ribosomal_uL1_B"/>
    <property type="match status" value="1"/>
</dbReference>
<dbReference type="InterPro" id="IPR005878">
    <property type="entry name" value="Ribosom_uL1_bac-type"/>
</dbReference>
<dbReference type="InterPro" id="IPR002143">
    <property type="entry name" value="Ribosomal_uL1"/>
</dbReference>
<dbReference type="InterPro" id="IPR023674">
    <property type="entry name" value="Ribosomal_uL1-like"/>
</dbReference>
<dbReference type="InterPro" id="IPR028364">
    <property type="entry name" value="Ribosomal_uL1/biogenesis"/>
</dbReference>
<dbReference type="InterPro" id="IPR016095">
    <property type="entry name" value="Ribosomal_uL1_3-a/b-sand"/>
</dbReference>
<dbReference type="InterPro" id="IPR023673">
    <property type="entry name" value="Ribosomal_uL1_CS"/>
</dbReference>
<dbReference type="NCBIfam" id="TIGR01169">
    <property type="entry name" value="rplA_bact"/>
    <property type="match status" value="1"/>
</dbReference>
<dbReference type="PANTHER" id="PTHR36427">
    <property type="entry name" value="54S RIBOSOMAL PROTEIN L1, MITOCHONDRIAL"/>
    <property type="match status" value="1"/>
</dbReference>
<dbReference type="PANTHER" id="PTHR36427:SF3">
    <property type="entry name" value="LARGE RIBOSOMAL SUBUNIT PROTEIN UL1M"/>
    <property type="match status" value="1"/>
</dbReference>
<dbReference type="Pfam" id="PF00687">
    <property type="entry name" value="Ribosomal_L1"/>
    <property type="match status" value="1"/>
</dbReference>
<dbReference type="PIRSF" id="PIRSF002155">
    <property type="entry name" value="Ribosomal_L1"/>
    <property type="match status" value="1"/>
</dbReference>
<dbReference type="SUPFAM" id="SSF56808">
    <property type="entry name" value="Ribosomal protein L1"/>
    <property type="match status" value="1"/>
</dbReference>
<dbReference type="PROSITE" id="PS01199">
    <property type="entry name" value="RIBOSOMAL_L1"/>
    <property type="match status" value="1"/>
</dbReference>
<feature type="chain" id="PRO_0000125674" description="Large ribosomal subunit protein uL1">
    <location>
        <begin position="1"/>
        <end position="231"/>
    </location>
</feature>
<gene>
    <name evidence="1" type="primary">rplA</name>
    <name type="ordered locus">lpg0319</name>
</gene>
<proteinExistence type="inferred from homology"/>
<comment type="function">
    <text evidence="1">Binds directly to 23S rRNA. The L1 stalk is quite mobile in the ribosome, and is involved in E site tRNA release.</text>
</comment>
<comment type="function">
    <text evidence="1">Protein L1 is also a translational repressor protein, it controls the translation of the L11 operon by binding to its mRNA.</text>
</comment>
<comment type="subunit">
    <text evidence="1">Part of the 50S ribosomal subunit.</text>
</comment>
<comment type="similarity">
    <text evidence="1">Belongs to the universal ribosomal protein uL1 family.</text>
</comment>
<protein>
    <recommendedName>
        <fullName evidence="1">Large ribosomal subunit protein uL1</fullName>
    </recommendedName>
    <alternativeName>
        <fullName evidence="2">50S ribosomal protein L1</fullName>
    </alternativeName>
</protein>
<name>RL1_LEGPH</name>